<organism>
    <name type="scientific">Mycobacterium tuberculosis (strain ATCC 25177 / H37Ra)</name>
    <dbReference type="NCBI Taxonomy" id="419947"/>
    <lineage>
        <taxon>Bacteria</taxon>
        <taxon>Bacillati</taxon>
        <taxon>Actinomycetota</taxon>
        <taxon>Actinomycetes</taxon>
        <taxon>Mycobacteriales</taxon>
        <taxon>Mycobacteriaceae</taxon>
        <taxon>Mycobacterium</taxon>
        <taxon>Mycobacterium tuberculosis complex</taxon>
    </lineage>
</organism>
<accession>A5U4M0</accession>
<proteinExistence type="evidence at protein level"/>
<name>TRPD_MYCTA</name>
<sequence>MALSAEGSSGGSRGGSPKAEAASVPSWPQILGRLTDNRDLARGQAAWAMDQIMTGNARPAQIAAFAVAMTMKAPTADEVGELAGVMLSHAHPLPADTVPDDAVDVVGTGGDGVNTVNLSTMAAIVVAAAGVPVVKHGNRAASSLSGGADTLEALGVRIDLGPDLVARSLAEVGIGFCFAPRFHPSYRHAAAVRREIGVPTVFNLLGPLTNPARPRAGLIGCAFADLAEVMAGVFAARRSSVLVVHGDDGLDELTTTTTSTIWRVAAGSVDKLTFDPAGFGFARAQLDQLAGGDAQANAAAVRAVLGGARGPVRDAVVLNAAGAIVAHAGLSSRAEWLPAWEEGLRRASAAIDTGAAEQLLARWVRFGRQI</sequence>
<dbReference type="EC" id="2.4.2.18" evidence="1"/>
<dbReference type="EMBL" id="CP000611">
    <property type="protein sequence ID" value="ABQ73970.1"/>
    <property type="molecule type" value="Genomic_DNA"/>
</dbReference>
<dbReference type="RefSeq" id="WP_003411387.1">
    <property type="nucleotide sequence ID" value="NZ_CP016972.1"/>
</dbReference>
<dbReference type="PDB" id="4ZOF">
    <property type="method" value="X-ray"/>
    <property type="resolution" value="1.80 A"/>
    <property type="chains" value="A/B=2-370"/>
</dbReference>
<dbReference type="PDB" id="4ZOJ">
    <property type="method" value="X-ray"/>
    <property type="resolution" value="1.96 A"/>
    <property type="chains" value="A/B=2-370"/>
</dbReference>
<dbReference type="PDB" id="4ZOK">
    <property type="method" value="X-ray"/>
    <property type="resolution" value="2.34 A"/>
    <property type="chains" value="A/B=2-370"/>
</dbReference>
<dbReference type="PDB" id="4ZTV">
    <property type="method" value="X-ray"/>
    <property type="resolution" value="2.01 A"/>
    <property type="chains" value="A/B=1-370"/>
</dbReference>
<dbReference type="PDB" id="5BO2">
    <property type="method" value="X-ray"/>
    <property type="resolution" value="2.00 A"/>
    <property type="chains" value="A/B=2-370"/>
</dbReference>
<dbReference type="PDB" id="5BO3">
    <property type="method" value="X-ray"/>
    <property type="resolution" value="1.75 A"/>
    <property type="chains" value="A/B=2-370"/>
</dbReference>
<dbReference type="PDBsum" id="4ZOF"/>
<dbReference type="PDBsum" id="4ZOJ"/>
<dbReference type="PDBsum" id="4ZOK"/>
<dbReference type="PDBsum" id="4ZTV"/>
<dbReference type="PDBsum" id="5BO2"/>
<dbReference type="PDBsum" id="5BO3"/>
<dbReference type="SMR" id="A5U4M0"/>
<dbReference type="GeneID" id="45427983"/>
<dbReference type="KEGG" id="mra:MRA_2208"/>
<dbReference type="eggNOG" id="COG0547">
    <property type="taxonomic scope" value="Bacteria"/>
</dbReference>
<dbReference type="HOGENOM" id="CLU_034315_4_1_11"/>
<dbReference type="BRENDA" id="2.4.2.18">
    <property type="organism ID" value="3445"/>
</dbReference>
<dbReference type="UniPathway" id="UPA00035">
    <property type="reaction ID" value="UER00041"/>
</dbReference>
<dbReference type="EvolutionaryTrace" id="A5U4M0"/>
<dbReference type="Proteomes" id="UP000001988">
    <property type="component" value="Chromosome"/>
</dbReference>
<dbReference type="GO" id="GO:0005829">
    <property type="term" value="C:cytosol"/>
    <property type="evidence" value="ECO:0007669"/>
    <property type="project" value="TreeGrafter"/>
</dbReference>
<dbReference type="GO" id="GO:0004048">
    <property type="term" value="F:anthranilate phosphoribosyltransferase activity"/>
    <property type="evidence" value="ECO:0007669"/>
    <property type="project" value="UniProtKB-UniRule"/>
</dbReference>
<dbReference type="GO" id="GO:0000287">
    <property type="term" value="F:magnesium ion binding"/>
    <property type="evidence" value="ECO:0007669"/>
    <property type="project" value="UniProtKB-UniRule"/>
</dbReference>
<dbReference type="GO" id="GO:0000162">
    <property type="term" value="P:L-tryptophan biosynthetic process"/>
    <property type="evidence" value="ECO:0007669"/>
    <property type="project" value="UniProtKB-UniRule"/>
</dbReference>
<dbReference type="FunFam" id="1.20.970.10:FF:000006">
    <property type="entry name" value="Anthranilate phosphoribosyltransferase"/>
    <property type="match status" value="1"/>
</dbReference>
<dbReference type="FunFam" id="3.40.1030.10:FF:000002">
    <property type="entry name" value="Anthranilate phosphoribosyltransferase"/>
    <property type="match status" value="1"/>
</dbReference>
<dbReference type="Gene3D" id="3.40.1030.10">
    <property type="entry name" value="Nucleoside phosphorylase/phosphoribosyltransferase catalytic domain"/>
    <property type="match status" value="1"/>
</dbReference>
<dbReference type="Gene3D" id="1.20.970.10">
    <property type="entry name" value="Transferase, Pyrimidine Nucleoside Phosphorylase, Chain C"/>
    <property type="match status" value="1"/>
</dbReference>
<dbReference type="HAMAP" id="MF_00211">
    <property type="entry name" value="TrpD"/>
    <property type="match status" value="1"/>
</dbReference>
<dbReference type="InterPro" id="IPR005940">
    <property type="entry name" value="Anthranilate_Pribosyl_Tfrase"/>
</dbReference>
<dbReference type="InterPro" id="IPR000312">
    <property type="entry name" value="Glycosyl_Trfase_fam3"/>
</dbReference>
<dbReference type="InterPro" id="IPR017459">
    <property type="entry name" value="Glycosyl_Trfase_fam3_N_dom"/>
</dbReference>
<dbReference type="InterPro" id="IPR036320">
    <property type="entry name" value="Glycosyl_Trfase_fam3_N_dom_sf"/>
</dbReference>
<dbReference type="InterPro" id="IPR035902">
    <property type="entry name" value="Nuc_phospho_transferase"/>
</dbReference>
<dbReference type="NCBIfam" id="TIGR01245">
    <property type="entry name" value="trpD"/>
    <property type="match status" value="1"/>
</dbReference>
<dbReference type="PANTHER" id="PTHR43285">
    <property type="entry name" value="ANTHRANILATE PHOSPHORIBOSYLTRANSFERASE"/>
    <property type="match status" value="1"/>
</dbReference>
<dbReference type="PANTHER" id="PTHR43285:SF2">
    <property type="entry name" value="ANTHRANILATE PHOSPHORIBOSYLTRANSFERASE"/>
    <property type="match status" value="1"/>
</dbReference>
<dbReference type="Pfam" id="PF02885">
    <property type="entry name" value="Glycos_trans_3N"/>
    <property type="match status" value="1"/>
</dbReference>
<dbReference type="Pfam" id="PF00591">
    <property type="entry name" value="Glycos_transf_3"/>
    <property type="match status" value="1"/>
</dbReference>
<dbReference type="SUPFAM" id="SSF52418">
    <property type="entry name" value="Nucleoside phosphorylase/phosphoribosyltransferase catalytic domain"/>
    <property type="match status" value="1"/>
</dbReference>
<dbReference type="SUPFAM" id="SSF47648">
    <property type="entry name" value="Nucleoside phosphorylase/phosphoribosyltransferase N-terminal domain"/>
    <property type="match status" value="1"/>
</dbReference>
<protein>
    <recommendedName>
        <fullName evidence="1">Anthranilate phosphoribosyltransferase</fullName>
        <ecNumber evidence="1">2.4.2.18</ecNumber>
    </recommendedName>
</protein>
<keyword id="KW-0002">3D-structure</keyword>
<keyword id="KW-0028">Amino-acid biosynthesis</keyword>
<keyword id="KW-0057">Aromatic amino acid biosynthesis</keyword>
<keyword id="KW-0328">Glycosyltransferase</keyword>
<keyword id="KW-0460">Magnesium</keyword>
<keyword id="KW-0479">Metal-binding</keyword>
<keyword id="KW-1185">Reference proteome</keyword>
<keyword id="KW-0808">Transferase</keyword>
<keyword id="KW-0822">Tryptophan biosynthesis</keyword>
<gene>
    <name evidence="1" type="primary">trpD</name>
    <name type="ordered locus">MRA_2208</name>
</gene>
<comment type="function">
    <text evidence="1">Catalyzes the transfer of the phosphoribosyl group of 5-phosphorylribose-1-pyrophosphate (PRPP) to anthranilate to yield N-(5'-phosphoribosyl)-anthranilate (PRA).</text>
</comment>
<comment type="catalytic activity">
    <reaction evidence="1">
        <text>N-(5-phospho-beta-D-ribosyl)anthranilate + diphosphate = 5-phospho-alpha-D-ribose 1-diphosphate + anthranilate</text>
        <dbReference type="Rhea" id="RHEA:11768"/>
        <dbReference type="ChEBI" id="CHEBI:16567"/>
        <dbReference type="ChEBI" id="CHEBI:18277"/>
        <dbReference type="ChEBI" id="CHEBI:33019"/>
        <dbReference type="ChEBI" id="CHEBI:58017"/>
        <dbReference type="EC" id="2.4.2.18"/>
    </reaction>
</comment>
<comment type="cofactor">
    <cofactor evidence="1">
        <name>Mg(2+)</name>
        <dbReference type="ChEBI" id="CHEBI:18420"/>
    </cofactor>
    <text evidence="1">Binds 2 magnesium ions per monomer.</text>
</comment>
<comment type="pathway">
    <text evidence="1">Amino-acid biosynthesis; L-tryptophan biosynthesis; L-tryptophan from chorismate: step 2/5.</text>
</comment>
<comment type="subunit">
    <text evidence="1">Homodimer.</text>
</comment>
<comment type="similarity">
    <text evidence="1">Belongs to the anthranilate phosphoribosyltransferase family.</text>
</comment>
<feature type="chain" id="PRO_1000043036" description="Anthranilate phosphoribosyltransferase">
    <location>
        <begin position="1"/>
        <end position="370"/>
    </location>
</feature>
<feature type="region of interest" description="Disordered" evidence="2">
    <location>
        <begin position="1"/>
        <end position="27"/>
    </location>
</feature>
<feature type="binding site" evidence="1">
    <location>
        <position position="107"/>
    </location>
    <ligand>
        <name>5-phospho-alpha-D-ribose 1-diphosphate</name>
        <dbReference type="ChEBI" id="CHEBI:58017"/>
    </ligand>
</feature>
<feature type="binding site" evidence="1">
    <location>
        <position position="107"/>
    </location>
    <ligand>
        <name>anthranilate</name>
        <dbReference type="ChEBI" id="CHEBI:16567"/>
        <label>1</label>
    </ligand>
</feature>
<feature type="binding site" evidence="1">
    <location>
        <begin position="110"/>
        <end position="111"/>
    </location>
    <ligand>
        <name>5-phospho-alpha-D-ribose 1-diphosphate</name>
        <dbReference type="ChEBI" id="CHEBI:58017"/>
    </ligand>
</feature>
<feature type="binding site" evidence="1">
    <location>
        <position position="115"/>
    </location>
    <ligand>
        <name>5-phospho-alpha-D-ribose 1-diphosphate</name>
        <dbReference type="ChEBI" id="CHEBI:58017"/>
    </ligand>
</feature>
<feature type="binding site" evidence="1">
    <location>
        <begin position="117"/>
        <end position="120"/>
    </location>
    <ligand>
        <name>5-phospho-alpha-D-ribose 1-diphosphate</name>
        <dbReference type="ChEBI" id="CHEBI:58017"/>
    </ligand>
</feature>
<feature type="binding site" evidence="1">
    <location>
        <position position="119"/>
    </location>
    <ligand>
        <name>Mg(2+)</name>
        <dbReference type="ChEBI" id="CHEBI:18420"/>
        <label>1</label>
    </ligand>
</feature>
<feature type="binding site" evidence="1">
    <location>
        <begin position="135"/>
        <end position="143"/>
    </location>
    <ligand>
        <name>5-phospho-alpha-D-ribose 1-diphosphate</name>
        <dbReference type="ChEBI" id="CHEBI:58017"/>
    </ligand>
</feature>
<feature type="binding site" evidence="1">
    <location>
        <position position="138"/>
    </location>
    <ligand>
        <name>anthranilate</name>
        <dbReference type="ChEBI" id="CHEBI:16567"/>
        <label>1</label>
    </ligand>
</feature>
<feature type="binding site" evidence="1">
    <location>
        <position position="147"/>
    </location>
    <ligand>
        <name>5-phospho-alpha-D-ribose 1-diphosphate</name>
        <dbReference type="ChEBI" id="CHEBI:58017"/>
    </ligand>
</feature>
<feature type="binding site" evidence="1">
    <location>
        <position position="193"/>
    </location>
    <ligand>
        <name>anthranilate</name>
        <dbReference type="ChEBI" id="CHEBI:16567"/>
        <label>2</label>
    </ligand>
</feature>
<feature type="binding site" evidence="1">
    <location>
        <position position="251"/>
    </location>
    <ligand>
        <name>Mg(2+)</name>
        <dbReference type="ChEBI" id="CHEBI:18420"/>
        <label>2</label>
    </ligand>
</feature>
<feature type="binding site" evidence="1">
    <location>
        <position position="252"/>
    </location>
    <ligand>
        <name>Mg(2+)</name>
        <dbReference type="ChEBI" id="CHEBI:18420"/>
        <label>1</label>
    </ligand>
</feature>
<feature type="binding site" evidence="1">
    <location>
        <position position="252"/>
    </location>
    <ligand>
        <name>Mg(2+)</name>
        <dbReference type="ChEBI" id="CHEBI:18420"/>
        <label>2</label>
    </ligand>
</feature>
<feature type="helix" evidence="4">
    <location>
        <begin position="27"/>
        <end position="35"/>
    </location>
</feature>
<feature type="helix" evidence="4">
    <location>
        <begin position="44"/>
        <end position="53"/>
    </location>
</feature>
<feature type="helix" evidence="4">
    <location>
        <begin position="59"/>
        <end position="71"/>
    </location>
</feature>
<feature type="helix" evidence="4">
    <location>
        <begin position="76"/>
        <end position="89"/>
    </location>
</feature>
<feature type="strand" evidence="4">
    <location>
        <begin position="103"/>
        <end position="107"/>
    </location>
</feature>
<feature type="helix" evidence="4">
    <location>
        <begin position="116"/>
        <end position="128"/>
    </location>
</feature>
<feature type="strand" evidence="4">
    <location>
        <begin position="133"/>
        <end position="137"/>
    </location>
</feature>
<feature type="strand" evidence="3">
    <location>
        <begin position="141"/>
        <end position="145"/>
    </location>
</feature>
<feature type="helix" evidence="4">
    <location>
        <begin position="149"/>
        <end position="153"/>
    </location>
</feature>
<feature type="helix" evidence="4">
    <location>
        <begin position="162"/>
        <end position="172"/>
    </location>
</feature>
<feature type="strand" evidence="4">
    <location>
        <begin position="173"/>
        <end position="178"/>
    </location>
</feature>
<feature type="helix" evidence="4">
    <location>
        <begin position="179"/>
        <end position="182"/>
    </location>
</feature>
<feature type="helix" evidence="4">
    <location>
        <begin position="184"/>
        <end position="186"/>
    </location>
</feature>
<feature type="helix" evidence="4">
    <location>
        <begin position="187"/>
        <end position="196"/>
    </location>
</feature>
<feature type="helix" evidence="4">
    <location>
        <begin position="201"/>
        <end position="204"/>
    </location>
</feature>
<feature type="helix" evidence="4">
    <location>
        <begin position="206"/>
        <end position="208"/>
    </location>
</feature>
<feature type="strand" evidence="4">
    <location>
        <begin position="215"/>
        <end position="220"/>
    </location>
</feature>
<feature type="helix" evidence="4">
    <location>
        <begin position="224"/>
        <end position="236"/>
    </location>
</feature>
<feature type="strand" evidence="4">
    <location>
        <begin position="240"/>
        <end position="246"/>
    </location>
</feature>
<feature type="strand" evidence="4">
    <location>
        <begin position="255"/>
        <end position="257"/>
    </location>
</feature>
<feature type="strand" evidence="4">
    <location>
        <begin position="259"/>
        <end position="265"/>
    </location>
</feature>
<feature type="strand" evidence="4">
    <location>
        <begin position="268"/>
        <end position="274"/>
    </location>
</feature>
<feature type="helix" evidence="4">
    <location>
        <begin position="276"/>
        <end position="279"/>
    </location>
</feature>
<feature type="helix" evidence="4">
    <location>
        <begin position="286"/>
        <end position="288"/>
    </location>
</feature>
<feature type="helix" evidence="4">
    <location>
        <begin position="294"/>
        <end position="305"/>
    </location>
</feature>
<feature type="helix" evidence="4">
    <location>
        <begin position="311"/>
        <end position="328"/>
    </location>
</feature>
<feature type="helix" evidence="4">
    <location>
        <begin position="336"/>
        <end position="352"/>
    </location>
</feature>
<feature type="helix" evidence="4">
    <location>
        <begin position="355"/>
        <end position="368"/>
    </location>
</feature>
<evidence type="ECO:0000255" key="1">
    <source>
        <dbReference type="HAMAP-Rule" id="MF_00211"/>
    </source>
</evidence>
<evidence type="ECO:0000256" key="2">
    <source>
        <dbReference type="SAM" id="MobiDB-lite"/>
    </source>
</evidence>
<evidence type="ECO:0007829" key="3">
    <source>
        <dbReference type="PDB" id="4ZOF"/>
    </source>
</evidence>
<evidence type="ECO:0007829" key="4">
    <source>
        <dbReference type="PDB" id="5BO3"/>
    </source>
</evidence>
<reference key="1">
    <citation type="journal article" date="2008" name="PLoS ONE">
        <title>Genetic basis of virulence attenuation revealed by comparative genomic analysis of Mycobacterium tuberculosis strain H37Ra versus H37Rv.</title>
        <authorList>
            <person name="Zheng H."/>
            <person name="Lu L."/>
            <person name="Wang B."/>
            <person name="Pu S."/>
            <person name="Zhang X."/>
            <person name="Zhu G."/>
            <person name="Shi W."/>
            <person name="Zhang L."/>
            <person name="Wang H."/>
            <person name="Wang S."/>
            <person name="Zhao G."/>
            <person name="Zhang Y."/>
        </authorList>
    </citation>
    <scope>NUCLEOTIDE SEQUENCE [LARGE SCALE GENOMIC DNA]</scope>
    <source>
        <strain>ATCC 25177 / H37Ra</strain>
    </source>
</reference>